<comment type="function">
    <text evidence="2">Involved in allosteric regulation of aspartate carbamoyltransferase.</text>
</comment>
<comment type="cofactor">
    <cofactor evidence="2">
        <name>Zn(2+)</name>
        <dbReference type="ChEBI" id="CHEBI:29105"/>
    </cofactor>
    <text evidence="2">Binds 1 zinc ion per subunit.</text>
</comment>
<comment type="subunit">
    <text evidence="1">Heterododecamer (2C3:3R2) of six catalytic PyrB chains organized as two trimers (C3), and six regulatory PyrI chains organized as three dimers (R2).</text>
</comment>
<comment type="similarity">
    <text evidence="2">Belongs to the PyrI family.</text>
</comment>
<organism>
    <name type="scientific">Salmonella typhi</name>
    <dbReference type="NCBI Taxonomy" id="90370"/>
    <lineage>
        <taxon>Bacteria</taxon>
        <taxon>Pseudomonadati</taxon>
        <taxon>Pseudomonadota</taxon>
        <taxon>Gammaproteobacteria</taxon>
        <taxon>Enterobacterales</taxon>
        <taxon>Enterobacteriaceae</taxon>
        <taxon>Salmonella</taxon>
    </lineage>
</organism>
<proteinExistence type="inferred from homology"/>
<keyword id="KW-0479">Metal-binding</keyword>
<keyword id="KW-0665">Pyrimidine biosynthesis</keyword>
<keyword id="KW-0862">Zinc</keyword>
<reference key="1">
    <citation type="journal article" date="2001" name="Nature">
        <title>Complete genome sequence of a multiple drug resistant Salmonella enterica serovar Typhi CT18.</title>
        <authorList>
            <person name="Parkhill J."/>
            <person name="Dougan G."/>
            <person name="James K.D."/>
            <person name="Thomson N.R."/>
            <person name="Pickard D."/>
            <person name="Wain J."/>
            <person name="Churcher C.M."/>
            <person name="Mungall K.L."/>
            <person name="Bentley S.D."/>
            <person name="Holden M.T.G."/>
            <person name="Sebaihia M."/>
            <person name="Baker S."/>
            <person name="Basham D."/>
            <person name="Brooks K."/>
            <person name="Chillingworth T."/>
            <person name="Connerton P."/>
            <person name="Cronin A."/>
            <person name="Davis P."/>
            <person name="Davies R.M."/>
            <person name="Dowd L."/>
            <person name="White N."/>
            <person name="Farrar J."/>
            <person name="Feltwell T."/>
            <person name="Hamlin N."/>
            <person name="Haque A."/>
            <person name="Hien T.T."/>
            <person name="Holroyd S."/>
            <person name="Jagels K."/>
            <person name="Krogh A."/>
            <person name="Larsen T.S."/>
            <person name="Leather S."/>
            <person name="Moule S."/>
            <person name="O'Gaora P."/>
            <person name="Parry C."/>
            <person name="Quail M.A."/>
            <person name="Rutherford K.M."/>
            <person name="Simmonds M."/>
            <person name="Skelton J."/>
            <person name="Stevens K."/>
            <person name="Whitehead S."/>
            <person name="Barrell B.G."/>
        </authorList>
    </citation>
    <scope>NUCLEOTIDE SEQUENCE [LARGE SCALE GENOMIC DNA]</scope>
    <source>
        <strain>CT18</strain>
    </source>
</reference>
<reference key="2">
    <citation type="journal article" date="2003" name="J. Bacteriol.">
        <title>Comparative genomics of Salmonella enterica serovar Typhi strains Ty2 and CT18.</title>
        <authorList>
            <person name="Deng W."/>
            <person name="Liou S.-R."/>
            <person name="Plunkett G. III"/>
            <person name="Mayhew G.F."/>
            <person name="Rose D.J."/>
            <person name="Burland V."/>
            <person name="Kodoyianni V."/>
            <person name="Schwartz D.C."/>
            <person name="Blattner F.R."/>
        </authorList>
    </citation>
    <scope>NUCLEOTIDE SEQUENCE [LARGE SCALE GENOMIC DNA]</scope>
    <source>
        <strain>ATCC 700931 / Ty2</strain>
    </source>
</reference>
<evidence type="ECO:0000250" key="1"/>
<evidence type="ECO:0000255" key="2">
    <source>
        <dbReference type="HAMAP-Rule" id="MF_00002"/>
    </source>
</evidence>
<protein>
    <recommendedName>
        <fullName evidence="2">Aspartate carbamoyltransferase regulatory chain</fullName>
    </recommendedName>
</protein>
<accession>Q8Z130</accession>
<dbReference type="EMBL" id="AL513382">
    <property type="protein sequence ID" value="CAD06920.1"/>
    <property type="molecule type" value="Genomic_DNA"/>
</dbReference>
<dbReference type="EMBL" id="AE014613">
    <property type="protein sequence ID" value="AAO71941.1"/>
    <property type="molecule type" value="Genomic_DNA"/>
</dbReference>
<dbReference type="RefSeq" id="NP_458877.1">
    <property type="nucleotide sequence ID" value="NC_003198.1"/>
</dbReference>
<dbReference type="RefSeq" id="WP_000148566.1">
    <property type="nucleotide sequence ID" value="NZ_WSUR01000016.1"/>
</dbReference>
<dbReference type="SMR" id="Q8Z130"/>
<dbReference type="STRING" id="220341.gene:17588620"/>
<dbReference type="KEGG" id="stt:t4494"/>
<dbReference type="KEGG" id="sty:STY4799"/>
<dbReference type="PATRIC" id="fig|220341.7.peg.4905"/>
<dbReference type="eggNOG" id="COG1781">
    <property type="taxonomic scope" value="Bacteria"/>
</dbReference>
<dbReference type="HOGENOM" id="CLU_128576_0_0_6"/>
<dbReference type="OMA" id="CPNRNCI"/>
<dbReference type="OrthoDB" id="5599321at2"/>
<dbReference type="Proteomes" id="UP000000541">
    <property type="component" value="Chromosome"/>
</dbReference>
<dbReference type="Proteomes" id="UP000002670">
    <property type="component" value="Chromosome"/>
</dbReference>
<dbReference type="GO" id="GO:0009347">
    <property type="term" value="C:aspartate carbamoyltransferase complex"/>
    <property type="evidence" value="ECO:0007669"/>
    <property type="project" value="InterPro"/>
</dbReference>
<dbReference type="GO" id="GO:0046872">
    <property type="term" value="F:metal ion binding"/>
    <property type="evidence" value="ECO:0007669"/>
    <property type="project" value="UniProtKB-KW"/>
</dbReference>
<dbReference type="GO" id="GO:0006207">
    <property type="term" value="P:'de novo' pyrimidine nucleobase biosynthetic process"/>
    <property type="evidence" value="ECO:0007669"/>
    <property type="project" value="InterPro"/>
</dbReference>
<dbReference type="GO" id="GO:0006221">
    <property type="term" value="P:pyrimidine nucleotide biosynthetic process"/>
    <property type="evidence" value="ECO:0007669"/>
    <property type="project" value="UniProtKB-UniRule"/>
</dbReference>
<dbReference type="FunFam" id="2.30.30.20:FF:000001">
    <property type="entry name" value="Aspartate carbamoyltransferase regulatory chain"/>
    <property type="match status" value="1"/>
</dbReference>
<dbReference type="FunFam" id="3.30.70.140:FF:000001">
    <property type="entry name" value="Aspartate carbamoyltransferase regulatory chain"/>
    <property type="match status" value="1"/>
</dbReference>
<dbReference type="Gene3D" id="2.30.30.20">
    <property type="entry name" value="Aspartate carbamoyltransferase regulatory subunit, C-terminal domain"/>
    <property type="match status" value="1"/>
</dbReference>
<dbReference type="Gene3D" id="3.30.70.140">
    <property type="entry name" value="Aspartate carbamoyltransferase regulatory subunit, N-terminal domain"/>
    <property type="match status" value="1"/>
</dbReference>
<dbReference type="HAMAP" id="MF_00002">
    <property type="entry name" value="Asp_carb_tr_reg"/>
    <property type="match status" value="1"/>
</dbReference>
<dbReference type="InterPro" id="IPR020545">
    <property type="entry name" value="Asp_carbamoyltransf_reg_N"/>
</dbReference>
<dbReference type="InterPro" id="IPR002801">
    <property type="entry name" value="Asp_carbamoylTrfase_reg"/>
</dbReference>
<dbReference type="InterPro" id="IPR020542">
    <property type="entry name" value="Asp_carbamoyltrfase_reg_C"/>
</dbReference>
<dbReference type="InterPro" id="IPR036792">
    <property type="entry name" value="Asp_carbatrfase_reg_C_sf"/>
</dbReference>
<dbReference type="InterPro" id="IPR036793">
    <property type="entry name" value="Asp_carbatrfase_reg_N_sf"/>
</dbReference>
<dbReference type="NCBIfam" id="TIGR00240">
    <property type="entry name" value="ATCase_reg"/>
    <property type="match status" value="1"/>
</dbReference>
<dbReference type="PANTHER" id="PTHR35805">
    <property type="entry name" value="ASPARTATE CARBAMOYLTRANSFERASE REGULATORY CHAIN"/>
    <property type="match status" value="1"/>
</dbReference>
<dbReference type="PANTHER" id="PTHR35805:SF1">
    <property type="entry name" value="ASPARTATE CARBAMOYLTRANSFERASE REGULATORY CHAIN"/>
    <property type="match status" value="1"/>
</dbReference>
<dbReference type="Pfam" id="PF01948">
    <property type="entry name" value="PyrI"/>
    <property type="match status" value="1"/>
</dbReference>
<dbReference type="Pfam" id="PF02748">
    <property type="entry name" value="PyrI_C"/>
    <property type="match status" value="1"/>
</dbReference>
<dbReference type="SUPFAM" id="SSF57825">
    <property type="entry name" value="Aspartate carbamoyltransferase, Regulatory-chain, C-terminal domain"/>
    <property type="match status" value="1"/>
</dbReference>
<dbReference type="SUPFAM" id="SSF54893">
    <property type="entry name" value="Aspartate carbamoyltransferase, Regulatory-chain, N-terminal domain"/>
    <property type="match status" value="1"/>
</dbReference>
<sequence length="153" mass="17024">MTHDNKLQVEAIKCGTVIDHIPAQVGFKLLSLFKLTETDQRITIGLNLPSGEMGRKDLIKIENTFLTDEQVNQLALYAPQATVNRIDNYDVVGKSRPSLPERINNVLVCPNSNCISHAEPVSSSFAVKKRANDIALKCKYCEKEFSHNVVLAN</sequence>
<gene>
    <name evidence="2" type="primary">pyrI</name>
    <name type="ordered locus">STY4799</name>
    <name type="ordered locus">t4494</name>
</gene>
<feature type="initiator methionine" description="Removed" evidence="1">
    <location>
        <position position="1"/>
    </location>
</feature>
<feature type="chain" id="PRO_0000142313" description="Aspartate carbamoyltransferase regulatory chain">
    <location>
        <begin position="2"/>
        <end position="153"/>
    </location>
</feature>
<feature type="binding site" evidence="2">
    <location>
        <position position="109"/>
    </location>
    <ligand>
        <name>Zn(2+)</name>
        <dbReference type="ChEBI" id="CHEBI:29105"/>
    </ligand>
</feature>
<feature type="binding site" evidence="2">
    <location>
        <position position="114"/>
    </location>
    <ligand>
        <name>Zn(2+)</name>
        <dbReference type="ChEBI" id="CHEBI:29105"/>
    </ligand>
</feature>
<feature type="binding site" evidence="2">
    <location>
        <position position="138"/>
    </location>
    <ligand>
        <name>Zn(2+)</name>
        <dbReference type="ChEBI" id="CHEBI:29105"/>
    </ligand>
</feature>
<feature type="binding site" evidence="2">
    <location>
        <position position="141"/>
    </location>
    <ligand>
        <name>Zn(2+)</name>
        <dbReference type="ChEBI" id="CHEBI:29105"/>
    </ligand>
</feature>
<name>PYRI_SALTI</name>